<evidence type="ECO:0000250" key="1">
    <source>
        <dbReference type="UniProtKB" id="Q8SXL2"/>
    </source>
</evidence>
<evidence type="ECO:0000255" key="2"/>
<evidence type="ECO:0000269" key="3">
    <source>
    </source>
</evidence>
<evidence type="ECO:0000303" key="4">
    <source>
    </source>
</evidence>
<evidence type="ECO:0000305" key="5"/>
<sequence>MAQMYLAVTIIALLAISHGVSAKRGCSAFGHSCFGGHGKRSGDTSAMDQLSNQDGVLMARHQLGQEETPPHPVYPHSGYNVLASGDDIIPIRDGGVYDREDGGAAREVMKMKLRNIFKHWMDNYRRSQQNPDDGYYIESL</sequence>
<reference evidence="5" key="1">
    <citation type="journal article" date="2018" name="J. Proteome Res.">
        <title>Mating-induced differential peptidomics of neuropeptides and protein hormones in Agrotis ipsilon moths.</title>
        <authorList>
            <person name="Diesner M."/>
            <person name="Gallot A."/>
            <person name="Binz H."/>
            <person name="Gaertner C."/>
            <person name="Vitecek S."/>
            <person name="Kahnt J."/>
            <person name="Schachtner J."/>
            <person name="Jacquin-Joly E."/>
            <person name="Gadenne C."/>
        </authorList>
    </citation>
    <scope>NUCLEOTIDE SEQUENCE [MRNA]</scope>
    <scope>PROTEIN SEQUENCE OF 25-37</scope>
    <scope>TISSUE SPECIFICITY</scope>
    <scope>MASS SPECTROMETRY</scope>
    <scope>IDENTIFICATION BY MASS SPECTROMETRY</scope>
    <scope>AMIDATION AT HIS-37</scope>
</reference>
<keyword id="KW-0027">Amidation</keyword>
<keyword id="KW-0165">Cleavage on pair of basic residues</keyword>
<keyword id="KW-0903">Direct protein sequencing</keyword>
<keyword id="KW-1015">Disulfide bond</keyword>
<keyword id="KW-0527">Neuropeptide</keyword>
<keyword id="KW-0964">Secreted</keyword>
<keyword id="KW-0732">Signal</keyword>
<protein>
    <recommendedName>
        <fullName evidence="4">Neuropeptide CCHamide-2</fullName>
        <shortName evidence="4">CCHa</shortName>
    </recommendedName>
</protein>
<organism>
    <name type="scientific">Agrotis ipsilon</name>
    <name type="common">Black cutworm moth</name>
    <dbReference type="NCBI Taxonomy" id="56364"/>
    <lineage>
        <taxon>Eukaryota</taxon>
        <taxon>Metazoa</taxon>
        <taxon>Ecdysozoa</taxon>
        <taxon>Arthropoda</taxon>
        <taxon>Hexapoda</taxon>
        <taxon>Insecta</taxon>
        <taxon>Pterygota</taxon>
        <taxon>Neoptera</taxon>
        <taxon>Endopterygota</taxon>
        <taxon>Lepidoptera</taxon>
        <taxon>Glossata</taxon>
        <taxon>Ditrysia</taxon>
        <taxon>Noctuoidea</taxon>
        <taxon>Noctuidae</taxon>
        <taxon>Noctuinae</taxon>
        <taxon>Noctuini</taxon>
        <taxon>Agrotis</taxon>
    </lineage>
</organism>
<comment type="function">
    <text evidence="1">Ligand for the CCHamide-2 receptor CCHa2-R.</text>
</comment>
<comment type="subcellular location">
    <subcellularLocation>
        <location evidence="5">Secreted</location>
    </subcellularLocation>
</comment>
<comment type="tissue specificity">
    <text evidence="3">Expressed in corpora cardiaca (CC), corpora allata (CA), antennal lobe (AL) and gnathal ganglion (GNG) (at protein level). Expression detected in few animals (at protein level).</text>
</comment>
<comment type="mass spectrometry"/>
<comment type="caution">
    <text evidence="5">Further mature peptides might exist.</text>
</comment>
<proteinExistence type="evidence at protein level"/>
<feature type="signal peptide" evidence="2">
    <location>
        <begin position="1"/>
        <end position="22"/>
    </location>
</feature>
<feature type="peptide" id="PRO_0000444222" description="Neuropeptide CCHamide-2" evidence="3">
    <location>
        <begin position="25"/>
        <end position="37"/>
    </location>
</feature>
<feature type="propeptide" id="PRO_0000444223" evidence="5">
    <location>
        <begin position="41"/>
        <end position="140"/>
    </location>
</feature>
<feature type="modified residue" description="Histidine amide" evidence="3">
    <location>
        <position position="37"/>
    </location>
</feature>
<feature type="disulfide bond" evidence="1">
    <location>
        <begin position="26"/>
        <end position="33"/>
    </location>
</feature>
<accession>C0HKT1</accession>
<dbReference type="SMR" id="C0HKT1"/>
<dbReference type="GO" id="GO:0005576">
    <property type="term" value="C:extracellular region"/>
    <property type="evidence" value="ECO:0007669"/>
    <property type="project" value="UniProtKB-SubCell"/>
</dbReference>
<dbReference type="GO" id="GO:0007218">
    <property type="term" value="P:neuropeptide signaling pathway"/>
    <property type="evidence" value="ECO:0007669"/>
    <property type="project" value="UniProtKB-KW"/>
</dbReference>
<name>CCHA2_AGRIP</name>